<comment type="function">
    <text evidence="1">This is one of the proteins that binds to the 5S RNA in the ribosome where it forms part of the central protuberance.</text>
</comment>
<comment type="subunit">
    <text evidence="1">Part of the 50S ribosomal subunit; part of the 5S rRNA/L5/L18/L25 subcomplex. Contacts the 5S rRNA. Binds to the 5S rRNA independently of L5 and L18.</text>
</comment>
<comment type="similarity">
    <text evidence="1">Belongs to the bacterial ribosomal protein bL25 family. CTC subfamily.</text>
</comment>
<feature type="chain" id="PRO_1000142501" description="Large ribosomal subunit protein bL25">
    <location>
        <begin position="1"/>
        <end position="196"/>
    </location>
</feature>
<feature type="region of interest" description="Disordered" evidence="2">
    <location>
        <begin position="177"/>
        <end position="196"/>
    </location>
</feature>
<sequence>METIALGVEPRVIRKKEAAKLRKNGIVPAVIYHKGEETVAVSVNEIALNKLVHSAESHIIDLQFPDGKTLRSFIKDVQFDPVSDRIIHTDFQLFAADEVVEMEVPVAISGDSIGVEKGGKILILRHALTIQGLPANMPDHVTIDVTNLDMGHIIHVREIPMDAYTGLSIMDEPETPVISIAPPKKDAEAETESAAG</sequence>
<name>RL25_CHLL2</name>
<organism>
    <name type="scientific">Chlorobium limicola (strain DSM 245 / NBRC 103803 / 6330)</name>
    <dbReference type="NCBI Taxonomy" id="290315"/>
    <lineage>
        <taxon>Bacteria</taxon>
        <taxon>Pseudomonadati</taxon>
        <taxon>Chlorobiota</taxon>
        <taxon>Chlorobiia</taxon>
        <taxon>Chlorobiales</taxon>
        <taxon>Chlorobiaceae</taxon>
        <taxon>Chlorobium/Pelodictyon group</taxon>
        <taxon>Chlorobium</taxon>
    </lineage>
</organism>
<reference key="1">
    <citation type="submission" date="2008-05" db="EMBL/GenBank/DDBJ databases">
        <title>Complete sequence of Chlorobium limicola DSM 245.</title>
        <authorList>
            <consortium name="US DOE Joint Genome Institute"/>
            <person name="Lucas S."/>
            <person name="Copeland A."/>
            <person name="Lapidus A."/>
            <person name="Glavina del Rio T."/>
            <person name="Dalin E."/>
            <person name="Tice H."/>
            <person name="Bruce D."/>
            <person name="Goodwin L."/>
            <person name="Pitluck S."/>
            <person name="Schmutz J."/>
            <person name="Larimer F."/>
            <person name="Land M."/>
            <person name="Hauser L."/>
            <person name="Kyrpides N."/>
            <person name="Ovchinnikova G."/>
            <person name="Zhao F."/>
            <person name="Li T."/>
            <person name="Liu Z."/>
            <person name="Overmann J."/>
            <person name="Bryant D.A."/>
            <person name="Richardson P."/>
        </authorList>
    </citation>
    <scope>NUCLEOTIDE SEQUENCE [LARGE SCALE GENOMIC DNA]</scope>
    <source>
        <strain>DSM 245 / NBRC 103803 / 6330</strain>
    </source>
</reference>
<dbReference type="EMBL" id="CP001097">
    <property type="protein sequence ID" value="ACD90592.1"/>
    <property type="molecule type" value="Genomic_DNA"/>
</dbReference>
<dbReference type="RefSeq" id="WP_012466468.1">
    <property type="nucleotide sequence ID" value="NC_010803.1"/>
</dbReference>
<dbReference type="SMR" id="B3EDG7"/>
<dbReference type="STRING" id="290315.Clim_1542"/>
<dbReference type="KEGG" id="cli:Clim_1542"/>
<dbReference type="eggNOG" id="COG1825">
    <property type="taxonomic scope" value="Bacteria"/>
</dbReference>
<dbReference type="HOGENOM" id="CLU_075939_2_1_10"/>
<dbReference type="OrthoDB" id="9786489at2"/>
<dbReference type="Proteomes" id="UP000008841">
    <property type="component" value="Chromosome"/>
</dbReference>
<dbReference type="GO" id="GO:0022625">
    <property type="term" value="C:cytosolic large ribosomal subunit"/>
    <property type="evidence" value="ECO:0007669"/>
    <property type="project" value="TreeGrafter"/>
</dbReference>
<dbReference type="GO" id="GO:0008097">
    <property type="term" value="F:5S rRNA binding"/>
    <property type="evidence" value="ECO:0007669"/>
    <property type="project" value="InterPro"/>
</dbReference>
<dbReference type="GO" id="GO:0003735">
    <property type="term" value="F:structural constituent of ribosome"/>
    <property type="evidence" value="ECO:0007669"/>
    <property type="project" value="InterPro"/>
</dbReference>
<dbReference type="GO" id="GO:0006412">
    <property type="term" value="P:translation"/>
    <property type="evidence" value="ECO:0007669"/>
    <property type="project" value="UniProtKB-UniRule"/>
</dbReference>
<dbReference type="CDD" id="cd00495">
    <property type="entry name" value="Ribosomal_L25_TL5_CTC"/>
    <property type="match status" value="1"/>
</dbReference>
<dbReference type="Gene3D" id="2.170.120.20">
    <property type="entry name" value="Ribosomal protein L25, beta domain"/>
    <property type="match status" value="1"/>
</dbReference>
<dbReference type="Gene3D" id="2.40.240.10">
    <property type="entry name" value="Ribosomal Protein L25, Chain P"/>
    <property type="match status" value="1"/>
</dbReference>
<dbReference type="HAMAP" id="MF_01334">
    <property type="entry name" value="Ribosomal_bL25_CTC"/>
    <property type="match status" value="1"/>
</dbReference>
<dbReference type="InterPro" id="IPR020056">
    <property type="entry name" value="Rbsml_bL25/Gln-tRNA_synth_N"/>
</dbReference>
<dbReference type="InterPro" id="IPR011035">
    <property type="entry name" value="Ribosomal_bL25/Gln-tRNA_synth"/>
</dbReference>
<dbReference type="InterPro" id="IPR020057">
    <property type="entry name" value="Ribosomal_bL25_b-dom"/>
</dbReference>
<dbReference type="InterPro" id="IPR037121">
    <property type="entry name" value="Ribosomal_bL25_C"/>
</dbReference>
<dbReference type="InterPro" id="IPR001021">
    <property type="entry name" value="Ribosomal_bL25_long"/>
</dbReference>
<dbReference type="InterPro" id="IPR029751">
    <property type="entry name" value="Ribosomal_L25_dom"/>
</dbReference>
<dbReference type="InterPro" id="IPR020930">
    <property type="entry name" value="Ribosomal_uL5_bac-type"/>
</dbReference>
<dbReference type="NCBIfam" id="TIGR00731">
    <property type="entry name" value="bL25_bact_ctc"/>
    <property type="match status" value="1"/>
</dbReference>
<dbReference type="NCBIfam" id="NF004136">
    <property type="entry name" value="PRK05618.3-2"/>
    <property type="match status" value="1"/>
</dbReference>
<dbReference type="PANTHER" id="PTHR33284">
    <property type="entry name" value="RIBOSOMAL PROTEIN L25/GLN-TRNA SYNTHETASE, ANTI-CODON-BINDING DOMAIN-CONTAINING PROTEIN"/>
    <property type="match status" value="1"/>
</dbReference>
<dbReference type="PANTHER" id="PTHR33284:SF1">
    <property type="entry name" value="RIBOSOMAL PROTEIN L25_GLN-TRNA SYNTHETASE, ANTI-CODON-BINDING DOMAIN-CONTAINING PROTEIN"/>
    <property type="match status" value="1"/>
</dbReference>
<dbReference type="Pfam" id="PF01386">
    <property type="entry name" value="Ribosomal_L25p"/>
    <property type="match status" value="1"/>
</dbReference>
<dbReference type="Pfam" id="PF14693">
    <property type="entry name" value="Ribosomal_TL5_C"/>
    <property type="match status" value="1"/>
</dbReference>
<dbReference type="SUPFAM" id="SSF50715">
    <property type="entry name" value="Ribosomal protein L25-like"/>
    <property type="match status" value="1"/>
</dbReference>
<keyword id="KW-0687">Ribonucleoprotein</keyword>
<keyword id="KW-0689">Ribosomal protein</keyword>
<keyword id="KW-0694">RNA-binding</keyword>
<keyword id="KW-0699">rRNA-binding</keyword>
<protein>
    <recommendedName>
        <fullName evidence="1">Large ribosomal subunit protein bL25</fullName>
    </recommendedName>
    <alternativeName>
        <fullName evidence="3">50S ribosomal protein L25</fullName>
    </alternativeName>
    <alternativeName>
        <fullName evidence="1">General stress protein CTC</fullName>
    </alternativeName>
</protein>
<accession>B3EDG7</accession>
<proteinExistence type="inferred from homology"/>
<gene>
    <name evidence="1" type="primary">rplY</name>
    <name evidence="1" type="synonym">ctc</name>
    <name type="ordered locus">Clim_1542</name>
</gene>
<evidence type="ECO:0000255" key="1">
    <source>
        <dbReference type="HAMAP-Rule" id="MF_01334"/>
    </source>
</evidence>
<evidence type="ECO:0000256" key="2">
    <source>
        <dbReference type="SAM" id="MobiDB-lite"/>
    </source>
</evidence>
<evidence type="ECO:0000305" key="3"/>